<dbReference type="EMBL" id="AK152318">
    <property type="protein sequence ID" value="BAE31120.1"/>
    <property type="molecule type" value="mRNA"/>
</dbReference>
<dbReference type="CCDS" id="CCDS48325.1"/>
<dbReference type="RefSeq" id="NP_001156897.1">
    <property type="nucleotide sequence ID" value="NM_001163425.1"/>
</dbReference>
<dbReference type="BioGRID" id="211807">
    <property type="interactions" value="1"/>
</dbReference>
<dbReference type="FunCoup" id="Q3U898">
    <property type="interactions" value="1472"/>
</dbReference>
<dbReference type="STRING" id="10090.ENSMUSP00000095247"/>
<dbReference type="iPTMnet" id="Q3U898"/>
<dbReference type="PhosphoSitePlus" id="Q3U898"/>
<dbReference type="jPOST" id="Q3U898"/>
<dbReference type="PaxDb" id="10090-ENSMUSP00000095247"/>
<dbReference type="ProteomicsDB" id="279287"/>
<dbReference type="Pumba" id="Q3U898"/>
<dbReference type="Ensembl" id="ENSMUST00000097642.4">
    <property type="protein sequence ID" value="ENSMUSP00000095247.4"/>
    <property type="gene ID" value="ENSMUSG00000073616.11"/>
</dbReference>
<dbReference type="GeneID" id="66915"/>
<dbReference type="KEGG" id="mmu:66915"/>
<dbReference type="UCSC" id="uc007cbq.2">
    <property type="organism name" value="mouse"/>
</dbReference>
<dbReference type="AGR" id="MGI:1914165"/>
<dbReference type="CTD" id="150678"/>
<dbReference type="MGI" id="MGI:1914165">
    <property type="gene designation" value="Cops9"/>
</dbReference>
<dbReference type="VEuPathDB" id="HostDB:ENSMUSG00000073616"/>
<dbReference type="eggNOG" id="ENOG502S7KZ">
    <property type="taxonomic scope" value="Eukaryota"/>
</dbReference>
<dbReference type="GeneTree" id="ENSGT01100000264638"/>
<dbReference type="HOGENOM" id="CLU_191079_0_0_1"/>
<dbReference type="InParanoid" id="Q3U898"/>
<dbReference type="OMA" id="SNDKHVH"/>
<dbReference type="OrthoDB" id="78974at9989"/>
<dbReference type="TreeFam" id="TF323869"/>
<dbReference type="BioGRID-ORCS" id="66915">
    <property type="hits" value="4 hits in 74 CRISPR screens"/>
</dbReference>
<dbReference type="ChiTaRS" id="Cops9">
    <property type="organism name" value="mouse"/>
</dbReference>
<dbReference type="PRO" id="PR:Q3U898"/>
<dbReference type="Proteomes" id="UP000000589">
    <property type="component" value="Chromosome 1"/>
</dbReference>
<dbReference type="RNAct" id="Q3U898">
    <property type="molecule type" value="protein"/>
</dbReference>
<dbReference type="Bgee" id="ENSMUSG00000073616">
    <property type="expression patterns" value="Expressed in facial nucleus and 260 other cell types or tissues"/>
</dbReference>
<dbReference type="ExpressionAtlas" id="Q3U898">
    <property type="expression patterns" value="baseline and differential"/>
</dbReference>
<dbReference type="GO" id="GO:0000785">
    <property type="term" value="C:chromatin"/>
    <property type="evidence" value="ECO:0000250"/>
    <property type="project" value="UniProtKB"/>
</dbReference>
<dbReference type="GO" id="GO:0008180">
    <property type="term" value="C:COP9 signalosome"/>
    <property type="evidence" value="ECO:0000250"/>
    <property type="project" value="UniProtKB"/>
</dbReference>
<dbReference type="GO" id="GO:0005737">
    <property type="term" value="C:cytoplasm"/>
    <property type="evidence" value="ECO:0000250"/>
    <property type="project" value="UniProtKB"/>
</dbReference>
<dbReference type="GO" id="GO:0005654">
    <property type="term" value="C:nucleoplasm"/>
    <property type="evidence" value="ECO:0000250"/>
    <property type="project" value="UniProtKB"/>
</dbReference>
<dbReference type="GO" id="GO:0005634">
    <property type="term" value="C:nucleus"/>
    <property type="evidence" value="ECO:0000250"/>
    <property type="project" value="UniProtKB"/>
</dbReference>
<dbReference type="GO" id="GO:0034644">
    <property type="term" value="P:cellular response to UV"/>
    <property type="evidence" value="ECO:0000250"/>
    <property type="project" value="UniProtKB"/>
</dbReference>
<dbReference type="GO" id="GO:0008284">
    <property type="term" value="P:positive regulation of cell population proliferation"/>
    <property type="evidence" value="ECO:0000250"/>
    <property type="project" value="UniProtKB"/>
</dbReference>
<dbReference type="InterPro" id="IPR029391">
    <property type="entry name" value="CSN9_metazoa"/>
</dbReference>
<dbReference type="PANTHER" id="PTHR28562">
    <property type="entry name" value="COP9 SIGNALOSOME COMPLEX SUBUNIT 9"/>
    <property type="match status" value="1"/>
</dbReference>
<dbReference type="Pfam" id="PF15004">
    <property type="entry name" value="MYEOV2"/>
    <property type="match status" value="1"/>
</dbReference>
<feature type="chain" id="PRO_0000332925" description="COP9 signalosome complex subunit 9">
    <location>
        <begin position="1"/>
        <end position="57"/>
    </location>
</feature>
<feature type="modified residue" description="Phosphothreonine" evidence="1">
    <location>
        <position position="26"/>
    </location>
</feature>
<proteinExistence type="evidence at protein level"/>
<sequence>MKPAVDEMFPEGAGPYVDLDEAGGSTGLLMDLAANEKAVHADFFNDFEDLFDDDDVQ</sequence>
<protein>
    <recommendedName>
        <fullName evidence="2">COP9 signalosome complex subunit 9</fullName>
    </recommendedName>
</protein>
<name>CSN9_MOUSE</name>
<comment type="function">
    <text evidence="1">Component of the COP9 signalosome complex (CSN), a complex involved in various cellular and developmental processes. The CSN complex is an essential regulator of the ubiquitin (Ubl) conjugation pathway by mediating the deneddylation of the cullin subunits of SCF-type E3 ligase complexes, leading to decrease the Ubl ligase activity of SCF-type complexes such as SCF, CSA or DDB2. The complex is also involved in phosphorylation of p53/TP53, c-jun/JUN, IkappaBalpha/NFKBIA, ITPK1 and IRF8/ICSBP, possibly via its association with CK2 and PKD kinases. CSN-dependent phosphorylation of TP53 and JUN promotes and protects degradation by the Ubl system, respectively. Plays a role in cell proliferation.</text>
</comment>
<comment type="subunit">
    <text evidence="1">Component of the CSN complex, composed of COPS1/GPS1, COPS2, COPS3, COPS4, COPS5, COPS6, COPS7 (COPS7A or COPS7B), COPS8 and COPS9. In the complex, it interacts directly with COPS3, COPS5 and COPS6.</text>
</comment>
<comment type="subcellular location">
    <subcellularLocation>
        <location evidence="1">Nucleus</location>
    </subcellularLocation>
    <subcellularLocation>
        <location evidence="1">Cytoplasm</location>
    </subcellularLocation>
    <subcellularLocation>
        <location evidence="1">Nucleus</location>
        <location evidence="1">Nucleoplasm</location>
    </subcellularLocation>
    <text evidence="1">Excluded from the nucleolus. Recruited to the nucleoplasm and chromatin following DNA damage induction.</text>
</comment>
<comment type="domain">
    <text evidence="1">The Phe/Asp-rich domain at the C-terminus is necessary for its incorporation into the CSN complex.</text>
</comment>
<comment type="similarity">
    <text evidence="2">Belongs to the CSN9 family.</text>
</comment>
<reference key="1">
    <citation type="journal article" date="2005" name="Science">
        <title>The transcriptional landscape of the mammalian genome.</title>
        <authorList>
            <person name="Carninci P."/>
            <person name="Kasukawa T."/>
            <person name="Katayama S."/>
            <person name="Gough J."/>
            <person name="Frith M.C."/>
            <person name="Maeda N."/>
            <person name="Oyama R."/>
            <person name="Ravasi T."/>
            <person name="Lenhard B."/>
            <person name="Wells C."/>
            <person name="Kodzius R."/>
            <person name="Shimokawa K."/>
            <person name="Bajic V.B."/>
            <person name="Brenner S.E."/>
            <person name="Batalov S."/>
            <person name="Forrest A.R."/>
            <person name="Zavolan M."/>
            <person name="Davis M.J."/>
            <person name="Wilming L.G."/>
            <person name="Aidinis V."/>
            <person name="Allen J.E."/>
            <person name="Ambesi-Impiombato A."/>
            <person name="Apweiler R."/>
            <person name="Aturaliya R.N."/>
            <person name="Bailey T.L."/>
            <person name="Bansal M."/>
            <person name="Baxter L."/>
            <person name="Beisel K.W."/>
            <person name="Bersano T."/>
            <person name="Bono H."/>
            <person name="Chalk A.M."/>
            <person name="Chiu K.P."/>
            <person name="Choudhary V."/>
            <person name="Christoffels A."/>
            <person name="Clutterbuck D.R."/>
            <person name="Crowe M.L."/>
            <person name="Dalla E."/>
            <person name="Dalrymple B.P."/>
            <person name="de Bono B."/>
            <person name="Della Gatta G."/>
            <person name="di Bernardo D."/>
            <person name="Down T."/>
            <person name="Engstrom P."/>
            <person name="Fagiolini M."/>
            <person name="Faulkner G."/>
            <person name="Fletcher C.F."/>
            <person name="Fukushima T."/>
            <person name="Furuno M."/>
            <person name="Futaki S."/>
            <person name="Gariboldi M."/>
            <person name="Georgii-Hemming P."/>
            <person name="Gingeras T.R."/>
            <person name="Gojobori T."/>
            <person name="Green R.E."/>
            <person name="Gustincich S."/>
            <person name="Harbers M."/>
            <person name="Hayashi Y."/>
            <person name="Hensch T.K."/>
            <person name="Hirokawa N."/>
            <person name="Hill D."/>
            <person name="Huminiecki L."/>
            <person name="Iacono M."/>
            <person name="Ikeo K."/>
            <person name="Iwama A."/>
            <person name="Ishikawa T."/>
            <person name="Jakt M."/>
            <person name="Kanapin A."/>
            <person name="Katoh M."/>
            <person name="Kawasawa Y."/>
            <person name="Kelso J."/>
            <person name="Kitamura H."/>
            <person name="Kitano H."/>
            <person name="Kollias G."/>
            <person name="Krishnan S.P."/>
            <person name="Kruger A."/>
            <person name="Kummerfeld S.K."/>
            <person name="Kurochkin I.V."/>
            <person name="Lareau L.F."/>
            <person name="Lazarevic D."/>
            <person name="Lipovich L."/>
            <person name="Liu J."/>
            <person name="Liuni S."/>
            <person name="McWilliam S."/>
            <person name="Madan Babu M."/>
            <person name="Madera M."/>
            <person name="Marchionni L."/>
            <person name="Matsuda H."/>
            <person name="Matsuzawa S."/>
            <person name="Miki H."/>
            <person name="Mignone F."/>
            <person name="Miyake S."/>
            <person name="Morris K."/>
            <person name="Mottagui-Tabar S."/>
            <person name="Mulder N."/>
            <person name="Nakano N."/>
            <person name="Nakauchi H."/>
            <person name="Ng P."/>
            <person name="Nilsson R."/>
            <person name="Nishiguchi S."/>
            <person name="Nishikawa S."/>
            <person name="Nori F."/>
            <person name="Ohara O."/>
            <person name="Okazaki Y."/>
            <person name="Orlando V."/>
            <person name="Pang K.C."/>
            <person name="Pavan W.J."/>
            <person name="Pavesi G."/>
            <person name="Pesole G."/>
            <person name="Petrovsky N."/>
            <person name="Piazza S."/>
            <person name="Reed J."/>
            <person name="Reid J.F."/>
            <person name="Ring B.Z."/>
            <person name="Ringwald M."/>
            <person name="Rost B."/>
            <person name="Ruan Y."/>
            <person name="Salzberg S.L."/>
            <person name="Sandelin A."/>
            <person name="Schneider C."/>
            <person name="Schoenbach C."/>
            <person name="Sekiguchi K."/>
            <person name="Semple C.A."/>
            <person name="Seno S."/>
            <person name="Sessa L."/>
            <person name="Sheng Y."/>
            <person name="Shibata Y."/>
            <person name="Shimada H."/>
            <person name="Shimada K."/>
            <person name="Silva D."/>
            <person name="Sinclair B."/>
            <person name="Sperling S."/>
            <person name="Stupka E."/>
            <person name="Sugiura K."/>
            <person name="Sultana R."/>
            <person name="Takenaka Y."/>
            <person name="Taki K."/>
            <person name="Tammoja K."/>
            <person name="Tan S.L."/>
            <person name="Tang S."/>
            <person name="Taylor M.S."/>
            <person name="Tegner J."/>
            <person name="Teichmann S.A."/>
            <person name="Ueda H.R."/>
            <person name="van Nimwegen E."/>
            <person name="Verardo R."/>
            <person name="Wei C.L."/>
            <person name="Yagi K."/>
            <person name="Yamanishi H."/>
            <person name="Zabarovsky E."/>
            <person name="Zhu S."/>
            <person name="Zimmer A."/>
            <person name="Hide W."/>
            <person name="Bult C."/>
            <person name="Grimmond S.M."/>
            <person name="Teasdale R.D."/>
            <person name="Liu E.T."/>
            <person name="Brusic V."/>
            <person name="Quackenbush J."/>
            <person name="Wahlestedt C."/>
            <person name="Mattick J.S."/>
            <person name="Hume D.A."/>
            <person name="Kai C."/>
            <person name="Sasaki D."/>
            <person name="Tomaru Y."/>
            <person name="Fukuda S."/>
            <person name="Kanamori-Katayama M."/>
            <person name="Suzuki M."/>
            <person name="Aoki J."/>
            <person name="Arakawa T."/>
            <person name="Iida J."/>
            <person name="Imamura K."/>
            <person name="Itoh M."/>
            <person name="Kato T."/>
            <person name="Kawaji H."/>
            <person name="Kawagashira N."/>
            <person name="Kawashima T."/>
            <person name="Kojima M."/>
            <person name="Kondo S."/>
            <person name="Konno H."/>
            <person name="Nakano K."/>
            <person name="Ninomiya N."/>
            <person name="Nishio T."/>
            <person name="Okada M."/>
            <person name="Plessy C."/>
            <person name="Shibata K."/>
            <person name="Shiraki T."/>
            <person name="Suzuki S."/>
            <person name="Tagami M."/>
            <person name="Waki K."/>
            <person name="Watahiki A."/>
            <person name="Okamura-Oho Y."/>
            <person name="Suzuki H."/>
            <person name="Kawai J."/>
            <person name="Hayashizaki Y."/>
        </authorList>
    </citation>
    <scope>NUCLEOTIDE SEQUENCE [LARGE SCALE MRNA]</scope>
    <source>
        <strain>C57BL/6J</strain>
        <tissue>Bone marrow</tissue>
    </source>
</reference>
<reference key="2">
    <citation type="journal article" date="2010" name="Cell">
        <title>A tissue-specific atlas of mouse protein phosphorylation and expression.</title>
        <authorList>
            <person name="Huttlin E.L."/>
            <person name="Jedrychowski M.P."/>
            <person name="Elias J.E."/>
            <person name="Goswami T."/>
            <person name="Rad R."/>
            <person name="Beausoleil S.A."/>
            <person name="Villen J."/>
            <person name="Haas W."/>
            <person name="Sowa M.E."/>
            <person name="Gygi S.P."/>
        </authorList>
    </citation>
    <scope>IDENTIFICATION BY MASS SPECTROMETRY [LARGE SCALE ANALYSIS]</scope>
    <source>
        <tissue>Pancreas</tissue>
    </source>
</reference>
<organism>
    <name type="scientific">Mus musculus</name>
    <name type="common">Mouse</name>
    <dbReference type="NCBI Taxonomy" id="10090"/>
    <lineage>
        <taxon>Eukaryota</taxon>
        <taxon>Metazoa</taxon>
        <taxon>Chordata</taxon>
        <taxon>Craniata</taxon>
        <taxon>Vertebrata</taxon>
        <taxon>Euteleostomi</taxon>
        <taxon>Mammalia</taxon>
        <taxon>Eutheria</taxon>
        <taxon>Euarchontoglires</taxon>
        <taxon>Glires</taxon>
        <taxon>Rodentia</taxon>
        <taxon>Myomorpha</taxon>
        <taxon>Muroidea</taxon>
        <taxon>Muridae</taxon>
        <taxon>Murinae</taxon>
        <taxon>Mus</taxon>
        <taxon>Mus</taxon>
    </lineage>
</organism>
<accession>Q3U898</accession>
<evidence type="ECO:0000250" key="1">
    <source>
        <dbReference type="UniProtKB" id="Q8WXC6"/>
    </source>
</evidence>
<evidence type="ECO:0000305" key="2"/>
<keyword id="KW-0963">Cytoplasm</keyword>
<keyword id="KW-0539">Nucleus</keyword>
<keyword id="KW-0597">Phosphoprotein</keyword>
<keyword id="KW-1185">Reference proteome</keyword>
<keyword id="KW-0736">Signalosome</keyword>
<gene>
    <name evidence="1" type="primary">Cops9</name>
    <name type="synonym">Myeov2</name>
</gene>